<name>YCF4_EUCGG</name>
<dbReference type="EMBL" id="AY780259">
    <property type="protein sequence ID" value="AAX21040.1"/>
    <property type="molecule type" value="Genomic_DNA"/>
</dbReference>
<dbReference type="RefSeq" id="YP_636310.1">
    <property type="nucleotide sequence ID" value="NC_008115.1"/>
</dbReference>
<dbReference type="GeneID" id="4108463"/>
<dbReference type="GO" id="GO:0009535">
    <property type="term" value="C:chloroplast thylakoid membrane"/>
    <property type="evidence" value="ECO:0007669"/>
    <property type="project" value="UniProtKB-SubCell"/>
</dbReference>
<dbReference type="GO" id="GO:0009522">
    <property type="term" value="C:photosystem I"/>
    <property type="evidence" value="ECO:0007669"/>
    <property type="project" value="InterPro"/>
</dbReference>
<dbReference type="GO" id="GO:0015979">
    <property type="term" value="P:photosynthesis"/>
    <property type="evidence" value="ECO:0007669"/>
    <property type="project" value="UniProtKB-UniRule"/>
</dbReference>
<dbReference type="HAMAP" id="MF_00437">
    <property type="entry name" value="Ycf4"/>
    <property type="match status" value="1"/>
</dbReference>
<dbReference type="InterPro" id="IPR003359">
    <property type="entry name" value="PSI_Ycf4_assembly"/>
</dbReference>
<dbReference type="NCBIfam" id="NF002712">
    <property type="entry name" value="PRK02542.1"/>
    <property type="match status" value="1"/>
</dbReference>
<dbReference type="PANTHER" id="PTHR33288">
    <property type="match status" value="1"/>
</dbReference>
<dbReference type="PANTHER" id="PTHR33288:SF4">
    <property type="entry name" value="PHOTOSYSTEM I ASSEMBLY PROTEIN YCF4"/>
    <property type="match status" value="1"/>
</dbReference>
<dbReference type="Pfam" id="PF02392">
    <property type="entry name" value="Ycf4"/>
    <property type="match status" value="1"/>
</dbReference>
<accession>Q49KY7</accession>
<keyword id="KW-0150">Chloroplast</keyword>
<keyword id="KW-0472">Membrane</keyword>
<keyword id="KW-0602">Photosynthesis</keyword>
<keyword id="KW-0934">Plastid</keyword>
<keyword id="KW-0793">Thylakoid</keyword>
<keyword id="KW-0812">Transmembrane</keyword>
<keyword id="KW-1133">Transmembrane helix</keyword>
<organism>
    <name type="scientific">Eucalyptus globulus subsp. globulus</name>
    <name type="common">Tasmanian blue gum</name>
    <dbReference type="NCBI Taxonomy" id="71271"/>
    <lineage>
        <taxon>Eukaryota</taxon>
        <taxon>Viridiplantae</taxon>
        <taxon>Streptophyta</taxon>
        <taxon>Embryophyta</taxon>
        <taxon>Tracheophyta</taxon>
        <taxon>Spermatophyta</taxon>
        <taxon>Magnoliopsida</taxon>
        <taxon>eudicotyledons</taxon>
        <taxon>Gunneridae</taxon>
        <taxon>Pentapetalae</taxon>
        <taxon>rosids</taxon>
        <taxon>malvids</taxon>
        <taxon>Myrtales</taxon>
        <taxon>Myrtaceae</taxon>
        <taxon>Myrtoideae</taxon>
        <taxon>Eucalypteae</taxon>
        <taxon>Eucalyptus</taxon>
    </lineage>
</organism>
<feature type="chain" id="PRO_0000275654" description="Photosystem I assembly protein Ycf4">
    <location>
        <begin position="1"/>
        <end position="184"/>
    </location>
</feature>
<feature type="transmembrane region" description="Helical" evidence="1">
    <location>
        <begin position="19"/>
        <end position="39"/>
    </location>
</feature>
<feature type="transmembrane region" description="Helical" evidence="1">
    <location>
        <begin position="57"/>
        <end position="77"/>
    </location>
</feature>
<comment type="function">
    <text evidence="1">Seems to be required for the assembly of the photosystem I complex.</text>
</comment>
<comment type="subcellular location">
    <subcellularLocation>
        <location evidence="1">Plastid</location>
        <location evidence="1">Chloroplast thylakoid membrane</location>
        <topology evidence="1">Multi-pass membrane protein</topology>
    </subcellularLocation>
</comment>
<comment type="similarity">
    <text evidence="1">Belongs to the Ycf4 family.</text>
</comment>
<gene>
    <name evidence="1" type="primary">ycf4</name>
</gene>
<sequence>MSCRSEHIWIELIVGSRKISNFCWAFILFLGSLGFVLVGSSSYLGKNLISLVPSQQILFFPQGIVMSFYGIAGLFISSYLWCTISWNVGSGYDRFDRKEGIVCIFRWGFPGKNRRIFLRFRMKDIQSIRIEVKEGISARRVLYMEIKGQGAVPLTRTDENLTPREIEQKAAELAYFLRVPIEVF</sequence>
<protein>
    <recommendedName>
        <fullName evidence="1">Photosystem I assembly protein Ycf4</fullName>
    </recommendedName>
</protein>
<evidence type="ECO:0000255" key="1">
    <source>
        <dbReference type="HAMAP-Rule" id="MF_00437"/>
    </source>
</evidence>
<geneLocation type="chloroplast"/>
<proteinExistence type="inferred from homology"/>
<reference key="1">
    <citation type="journal article" date="2005" name="DNA Res.">
        <title>Complete nucleotide sequence of the chloroplast genome from the Tasmanian blue gum, Eucalyptus globulus (Myrtaceae).</title>
        <authorList>
            <person name="Steane D.A."/>
        </authorList>
    </citation>
    <scope>NUCLEOTIDE SEQUENCE [LARGE SCALE GENOMIC DNA]</scope>
</reference>